<evidence type="ECO:0000255" key="1">
    <source>
        <dbReference type="HAMAP-Rule" id="MF_01346"/>
    </source>
</evidence>
<comment type="function">
    <text evidence="1">Produces ATP from ADP in the presence of a proton gradient across the membrane. The alpha chain is a regulatory subunit.</text>
</comment>
<comment type="catalytic activity">
    <reaction evidence="1">
        <text>ATP + H2O + 4 H(+)(in) = ADP + phosphate + 5 H(+)(out)</text>
        <dbReference type="Rhea" id="RHEA:57720"/>
        <dbReference type="ChEBI" id="CHEBI:15377"/>
        <dbReference type="ChEBI" id="CHEBI:15378"/>
        <dbReference type="ChEBI" id="CHEBI:30616"/>
        <dbReference type="ChEBI" id="CHEBI:43474"/>
        <dbReference type="ChEBI" id="CHEBI:456216"/>
        <dbReference type="EC" id="7.1.2.2"/>
    </reaction>
</comment>
<comment type="subunit">
    <text evidence="1">F-type ATPases have 2 components, CF(1) - the catalytic core - and CF(0) - the membrane proton channel. CF(1) has five subunits: alpha(3), beta(3), gamma(1), delta(1), epsilon(1). CF(0) has three main subunits: a(1), b(2) and c(9-12). The alpha and beta chains form an alternating ring which encloses part of the gamma chain. CF(1) is attached to CF(0) by a central stalk formed by the gamma and epsilon chains, while a peripheral stalk is formed by the delta and b chains.</text>
</comment>
<comment type="subcellular location">
    <subcellularLocation>
        <location evidence="1">Cell inner membrane</location>
        <topology evidence="1">Peripheral membrane protein</topology>
    </subcellularLocation>
</comment>
<comment type="similarity">
    <text evidence="1">Belongs to the ATPase alpha/beta chains family.</text>
</comment>
<name>ATPA_ACIF5</name>
<feature type="chain" id="PRO_1000143333" description="ATP synthase subunit alpha">
    <location>
        <begin position="1"/>
        <end position="514"/>
    </location>
</feature>
<feature type="binding site" evidence="1">
    <location>
        <begin position="170"/>
        <end position="177"/>
    </location>
    <ligand>
        <name>ATP</name>
        <dbReference type="ChEBI" id="CHEBI:30616"/>
    </ligand>
</feature>
<feature type="site" description="Required for activity" evidence="1">
    <location>
        <position position="374"/>
    </location>
</feature>
<proteinExistence type="inferred from homology"/>
<dbReference type="EC" id="7.1.2.2" evidence="1"/>
<dbReference type="EMBL" id="CP001132">
    <property type="protein sequence ID" value="ACH84995.1"/>
    <property type="molecule type" value="Genomic_DNA"/>
</dbReference>
<dbReference type="RefSeq" id="WP_012537657.1">
    <property type="nucleotide sequence ID" value="NC_011206.1"/>
</dbReference>
<dbReference type="SMR" id="B5ER44"/>
<dbReference type="GeneID" id="65282189"/>
<dbReference type="KEGG" id="afe:Lferr_2809"/>
<dbReference type="eggNOG" id="COG0056">
    <property type="taxonomic scope" value="Bacteria"/>
</dbReference>
<dbReference type="HOGENOM" id="CLU_010091_2_1_6"/>
<dbReference type="GO" id="GO:0005886">
    <property type="term" value="C:plasma membrane"/>
    <property type="evidence" value="ECO:0007669"/>
    <property type="project" value="UniProtKB-SubCell"/>
</dbReference>
<dbReference type="GO" id="GO:0045259">
    <property type="term" value="C:proton-transporting ATP synthase complex"/>
    <property type="evidence" value="ECO:0007669"/>
    <property type="project" value="UniProtKB-KW"/>
</dbReference>
<dbReference type="GO" id="GO:0043531">
    <property type="term" value="F:ADP binding"/>
    <property type="evidence" value="ECO:0007669"/>
    <property type="project" value="TreeGrafter"/>
</dbReference>
<dbReference type="GO" id="GO:0005524">
    <property type="term" value="F:ATP binding"/>
    <property type="evidence" value="ECO:0007669"/>
    <property type="project" value="UniProtKB-UniRule"/>
</dbReference>
<dbReference type="GO" id="GO:0046933">
    <property type="term" value="F:proton-transporting ATP synthase activity, rotational mechanism"/>
    <property type="evidence" value="ECO:0007669"/>
    <property type="project" value="UniProtKB-UniRule"/>
</dbReference>
<dbReference type="CDD" id="cd18113">
    <property type="entry name" value="ATP-synt_F1_alpha_C"/>
    <property type="match status" value="1"/>
</dbReference>
<dbReference type="CDD" id="cd18116">
    <property type="entry name" value="ATP-synt_F1_alpha_N"/>
    <property type="match status" value="1"/>
</dbReference>
<dbReference type="CDD" id="cd01132">
    <property type="entry name" value="F1-ATPase_alpha_CD"/>
    <property type="match status" value="1"/>
</dbReference>
<dbReference type="FunFam" id="1.20.150.20:FF:000001">
    <property type="entry name" value="ATP synthase subunit alpha"/>
    <property type="match status" value="1"/>
</dbReference>
<dbReference type="FunFam" id="2.40.30.20:FF:000001">
    <property type="entry name" value="ATP synthase subunit alpha"/>
    <property type="match status" value="1"/>
</dbReference>
<dbReference type="FunFam" id="3.40.50.300:FF:000002">
    <property type="entry name" value="ATP synthase subunit alpha"/>
    <property type="match status" value="1"/>
</dbReference>
<dbReference type="Gene3D" id="2.40.30.20">
    <property type="match status" value="1"/>
</dbReference>
<dbReference type="Gene3D" id="1.20.150.20">
    <property type="entry name" value="ATP synthase alpha/beta chain, C-terminal domain"/>
    <property type="match status" value="1"/>
</dbReference>
<dbReference type="Gene3D" id="3.40.50.300">
    <property type="entry name" value="P-loop containing nucleotide triphosphate hydrolases"/>
    <property type="match status" value="1"/>
</dbReference>
<dbReference type="HAMAP" id="MF_01346">
    <property type="entry name" value="ATP_synth_alpha_bact"/>
    <property type="match status" value="1"/>
</dbReference>
<dbReference type="InterPro" id="IPR023366">
    <property type="entry name" value="ATP_synth_asu-like_sf"/>
</dbReference>
<dbReference type="InterPro" id="IPR000793">
    <property type="entry name" value="ATP_synth_asu_C"/>
</dbReference>
<dbReference type="InterPro" id="IPR038376">
    <property type="entry name" value="ATP_synth_asu_C_sf"/>
</dbReference>
<dbReference type="InterPro" id="IPR033732">
    <property type="entry name" value="ATP_synth_F1_a_nt-bd_dom"/>
</dbReference>
<dbReference type="InterPro" id="IPR005294">
    <property type="entry name" value="ATP_synth_F1_asu"/>
</dbReference>
<dbReference type="InterPro" id="IPR020003">
    <property type="entry name" value="ATPase_a/bsu_AS"/>
</dbReference>
<dbReference type="InterPro" id="IPR004100">
    <property type="entry name" value="ATPase_F1/V1/A1_a/bsu_N"/>
</dbReference>
<dbReference type="InterPro" id="IPR036121">
    <property type="entry name" value="ATPase_F1/V1/A1_a/bsu_N_sf"/>
</dbReference>
<dbReference type="InterPro" id="IPR000194">
    <property type="entry name" value="ATPase_F1/V1/A1_a/bsu_nucl-bd"/>
</dbReference>
<dbReference type="InterPro" id="IPR027417">
    <property type="entry name" value="P-loop_NTPase"/>
</dbReference>
<dbReference type="NCBIfam" id="TIGR00962">
    <property type="entry name" value="atpA"/>
    <property type="match status" value="1"/>
</dbReference>
<dbReference type="NCBIfam" id="NF009884">
    <property type="entry name" value="PRK13343.1"/>
    <property type="match status" value="1"/>
</dbReference>
<dbReference type="PANTHER" id="PTHR48082">
    <property type="entry name" value="ATP SYNTHASE SUBUNIT ALPHA, MITOCHONDRIAL"/>
    <property type="match status" value="1"/>
</dbReference>
<dbReference type="PANTHER" id="PTHR48082:SF2">
    <property type="entry name" value="ATP SYNTHASE SUBUNIT ALPHA, MITOCHONDRIAL"/>
    <property type="match status" value="1"/>
</dbReference>
<dbReference type="Pfam" id="PF00006">
    <property type="entry name" value="ATP-synt_ab"/>
    <property type="match status" value="1"/>
</dbReference>
<dbReference type="Pfam" id="PF00306">
    <property type="entry name" value="ATP-synt_ab_C"/>
    <property type="match status" value="1"/>
</dbReference>
<dbReference type="Pfam" id="PF02874">
    <property type="entry name" value="ATP-synt_ab_N"/>
    <property type="match status" value="1"/>
</dbReference>
<dbReference type="PIRSF" id="PIRSF039088">
    <property type="entry name" value="F_ATPase_subunit_alpha"/>
    <property type="match status" value="1"/>
</dbReference>
<dbReference type="SUPFAM" id="SSF47917">
    <property type="entry name" value="C-terminal domain of alpha and beta subunits of F1 ATP synthase"/>
    <property type="match status" value="1"/>
</dbReference>
<dbReference type="SUPFAM" id="SSF50615">
    <property type="entry name" value="N-terminal domain of alpha and beta subunits of F1 ATP synthase"/>
    <property type="match status" value="1"/>
</dbReference>
<dbReference type="SUPFAM" id="SSF52540">
    <property type="entry name" value="P-loop containing nucleoside triphosphate hydrolases"/>
    <property type="match status" value="1"/>
</dbReference>
<dbReference type="PROSITE" id="PS00152">
    <property type="entry name" value="ATPASE_ALPHA_BETA"/>
    <property type="match status" value="1"/>
</dbReference>
<sequence length="514" mass="55605">MQQLNPSEISELIRARIAGFEGRVETRSQGTIISLSDGILRIHGLEDVMYGEMLELPGGRFGLAMNLEQDNVGAVVLGEFSGLQEGDVVKCTGRVMQVPIGKALLGRVVNALGQPVDGKGAIDAEEFDVLEKIAPGVIDRQSVDEPMQTGIKSIDAMVPIGRGQRELIIGDRQTGKTAVAVDAILNQKGKDVQCIYVAIGQKASTVAGVVRKLEEYGAMEYTTVIAANASESAAMQYLAPYAGCTMGEYFRDRGMNALIVYDDLTKQAWAYRQISLLLRRPPGREAYPGDVFYLHSRLLERAARVNADFVEKFTKGEVKGKTGSLTALPIIETQAGDVSAFVPTNVISITDGQIYLETDLFNAGIRPAINAGLSVSRVGGAAQTKIIKKLGGGIRLDLAQYRELAAFAQFASDLDEITRKQIERGKRVTELLKQDQFSPMSVAEQGAALFAASSGALDDVEVANVRPFEKALLAYLNSNNKELMAGIEEKKDLTDDLKKQLDAAVKQFKSGSTY</sequence>
<reference key="1">
    <citation type="submission" date="2008-08" db="EMBL/GenBank/DDBJ databases">
        <title>Complete sequence of Acidithiobacillus ferrooxidans ATCC 53993.</title>
        <authorList>
            <person name="Lucas S."/>
            <person name="Copeland A."/>
            <person name="Lapidus A."/>
            <person name="Glavina del Rio T."/>
            <person name="Dalin E."/>
            <person name="Tice H."/>
            <person name="Bruce D."/>
            <person name="Goodwin L."/>
            <person name="Pitluck S."/>
            <person name="Sims D."/>
            <person name="Brettin T."/>
            <person name="Detter J.C."/>
            <person name="Han C."/>
            <person name="Kuske C.R."/>
            <person name="Larimer F."/>
            <person name="Land M."/>
            <person name="Hauser L."/>
            <person name="Kyrpides N."/>
            <person name="Lykidis A."/>
            <person name="Borole A.P."/>
        </authorList>
    </citation>
    <scope>NUCLEOTIDE SEQUENCE [LARGE SCALE GENOMIC DNA]</scope>
    <source>
        <strain>ATCC 53993 / BNL-5-31</strain>
    </source>
</reference>
<accession>B5ER44</accession>
<gene>
    <name evidence="1" type="primary">atpA</name>
    <name type="ordered locus">Lferr_2809</name>
</gene>
<keyword id="KW-0066">ATP synthesis</keyword>
<keyword id="KW-0067">ATP-binding</keyword>
<keyword id="KW-0997">Cell inner membrane</keyword>
<keyword id="KW-1003">Cell membrane</keyword>
<keyword id="KW-0139">CF(1)</keyword>
<keyword id="KW-0375">Hydrogen ion transport</keyword>
<keyword id="KW-0406">Ion transport</keyword>
<keyword id="KW-0472">Membrane</keyword>
<keyword id="KW-0547">Nucleotide-binding</keyword>
<keyword id="KW-1278">Translocase</keyword>
<keyword id="KW-0813">Transport</keyword>
<protein>
    <recommendedName>
        <fullName evidence="1">ATP synthase subunit alpha</fullName>
        <ecNumber evidence="1">7.1.2.2</ecNumber>
    </recommendedName>
    <alternativeName>
        <fullName evidence="1">ATP synthase F1 sector subunit alpha</fullName>
    </alternativeName>
    <alternativeName>
        <fullName evidence="1">F-ATPase subunit alpha</fullName>
    </alternativeName>
</protein>
<organism>
    <name type="scientific">Acidithiobacillus ferrooxidans (strain ATCC 53993 / BNL-5-31)</name>
    <name type="common">Leptospirillum ferrooxidans (ATCC 53993)</name>
    <dbReference type="NCBI Taxonomy" id="380394"/>
    <lineage>
        <taxon>Bacteria</taxon>
        <taxon>Pseudomonadati</taxon>
        <taxon>Pseudomonadota</taxon>
        <taxon>Acidithiobacillia</taxon>
        <taxon>Acidithiobacillales</taxon>
        <taxon>Acidithiobacillaceae</taxon>
        <taxon>Acidithiobacillus</taxon>
    </lineage>
</organism>